<proteinExistence type="evidence at protein level"/>
<reference key="1">
    <citation type="journal article" date="2005" name="Biochemistry">
        <title>Genetic polymorphism and expression of a highly potent scorpion depressant toxin enable refinement of the effects on insect Na channels and illuminate the key role of Asn-58.</title>
        <authorList>
            <person name="Strugatsky D."/>
            <person name="Zilberberg N."/>
            <person name="Stankiewicz M."/>
            <person name="Ilan N."/>
            <person name="Turkov M."/>
            <person name="Cohen L."/>
            <person name="Pelhate M."/>
            <person name="Gilles N."/>
            <person name="Gordon D."/>
            <person name="Gurevitz M."/>
        </authorList>
    </citation>
    <scope>NUCLEOTIDE SEQUENCE [MRNA]</scope>
    <scope>PARTIAL PROTEIN SEQUENCE</scope>
    <scope>FUNCTION</scope>
    <scope>TOXIC DOSE</scope>
    <source>
        <tissue>Venom</tissue>
        <tissue>Venom gland</tissue>
    </source>
</reference>
<sequence>MKLLLLLTISASMLIEGLVNADGYIRGGDGCKVSCVINHVFCDNECKAAGGSYGYCWGWGLACWCEGLPADREWDYETNTCGGKK</sequence>
<feature type="signal peptide">
    <location>
        <begin position="1"/>
        <end position="21"/>
    </location>
</feature>
<feature type="chain" id="PRO_0000307612" description="Beta-insect depressant toxin Lqh-dprIT3b">
    <location>
        <begin position="22"/>
        <end position="82"/>
    </location>
</feature>
<feature type="domain" description="LCN-type CS-alpha/beta" evidence="2">
    <location>
        <begin position="22"/>
        <end position="82"/>
    </location>
</feature>
<feature type="site" description="Important for toxicity">
    <location>
        <position position="79"/>
    </location>
</feature>
<feature type="modified residue" description="Glycine amide" evidence="1">
    <location>
        <position position="82"/>
    </location>
</feature>
<feature type="disulfide bond" evidence="2">
    <location>
        <begin position="31"/>
        <end position="81"/>
    </location>
</feature>
<feature type="disulfide bond" evidence="2">
    <location>
        <begin position="35"/>
        <end position="56"/>
    </location>
</feature>
<feature type="disulfide bond" evidence="2">
    <location>
        <begin position="42"/>
        <end position="63"/>
    </location>
</feature>
<feature type="disulfide bond" evidence="2">
    <location>
        <begin position="46"/>
        <end position="65"/>
    </location>
</feature>
<comment type="function">
    <text evidence="3">Depressant insect beta-toxins cause a transient contraction paralysis followed by a slow flaccid paralysis. They bind voltage-independently at site-4 of sodium channels (Nav) and block action potentials, primarily by depolarizing the axonal membrane and suppressing the sodium current. This depressant toxin is active only on insects. It is found in a relatively small amount in the venom, and its activity on insects is 10-fold higher compared to other known depressant toxins.</text>
</comment>
<comment type="subcellular location">
    <subcellularLocation>
        <location>Secreted</location>
    </subcellularLocation>
</comment>
<comment type="tissue specificity">
    <text>Expressed by the venom gland.</text>
</comment>
<comment type="domain">
    <text evidence="4">Has the structural arrangement of an alpha-helix connected to antiparallel beta-sheets by disulfide bonds (CS-alpha/beta).</text>
</comment>
<comment type="toxic dose">
    <text evidence="3">PD(50) is 3-5 ng/100 mg of body weight of Sarcophaga larvae for both contraction and flaccid paralysis.</text>
</comment>
<comment type="similarity">
    <text evidence="4">Belongs to the long (4 C-C) scorpion toxin superfamily. Sodium channel inhibitor family. Beta subfamily.</text>
</comment>
<evidence type="ECO:0000250" key="1"/>
<evidence type="ECO:0000255" key="2">
    <source>
        <dbReference type="PROSITE-ProRule" id="PRU01210"/>
    </source>
</evidence>
<evidence type="ECO:0000269" key="3">
    <source>
    </source>
</evidence>
<evidence type="ECO:0000305" key="4"/>
<accession>P0C5I4</accession>
<protein>
    <recommendedName>
        <fullName>Beta-insect depressant toxin Lqh-dprIT3b</fullName>
    </recommendedName>
</protein>
<name>SIX3B_LEIHE</name>
<organism>
    <name type="scientific">Leiurus hebraeus</name>
    <name type="common">Hebrew deathstalker scorpion</name>
    <name type="synonym">Leiurus quinquestriatus hebraeus</name>
    <dbReference type="NCBI Taxonomy" id="2899558"/>
    <lineage>
        <taxon>Eukaryota</taxon>
        <taxon>Metazoa</taxon>
        <taxon>Ecdysozoa</taxon>
        <taxon>Arthropoda</taxon>
        <taxon>Chelicerata</taxon>
        <taxon>Arachnida</taxon>
        <taxon>Scorpiones</taxon>
        <taxon>Buthida</taxon>
        <taxon>Buthoidea</taxon>
        <taxon>Buthidae</taxon>
        <taxon>Leiurus</taxon>
    </lineage>
</organism>
<dbReference type="SMR" id="P0C5I4"/>
<dbReference type="GO" id="GO:0005576">
    <property type="term" value="C:extracellular region"/>
    <property type="evidence" value="ECO:0007669"/>
    <property type="project" value="UniProtKB-SubCell"/>
</dbReference>
<dbReference type="GO" id="GO:0019871">
    <property type="term" value="F:sodium channel inhibitor activity"/>
    <property type="evidence" value="ECO:0007669"/>
    <property type="project" value="InterPro"/>
</dbReference>
<dbReference type="GO" id="GO:0090729">
    <property type="term" value="F:toxin activity"/>
    <property type="evidence" value="ECO:0007669"/>
    <property type="project" value="UniProtKB-KW"/>
</dbReference>
<dbReference type="GO" id="GO:0006952">
    <property type="term" value="P:defense response"/>
    <property type="evidence" value="ECO:0007669"/>
    <property type="project" value="InterPro"/>
</dbReference>
<dbReference type="CDD" id="cd23106">
    <property type="entry name" value="neurotoxins_LC_scorpion"/>
    <property type="match status" value="1"/>
</dbReference>
<dbReference type="Gene3D" id="3.30.30.10">
    <property type="entry name" value="Knottin, scorpion toxin-like"/>
    <property type="match status" value="1"/>
</dbReference>
<dbReference type="InterPro" id="IPR044062">
    <property type="entry name" value="LCN-type_CS_alpha_beta_dom"/>
</dbReference>
<dbReference type="InterPro" id="IPR003614">
    <property type="entry name" value="Scorpion_toxin-like"/>
</dbReference>
<dbReference type="InterPro" id="IPR036574">
    <property type="entry name" value="Scorpion_toxin-like_sf"/>
</dbReference>
<dbReference type="InterPro" id="IPR018218">
    <property type="entry name" value="Scorpion_toxinL"/>
</dbReference>
<dbReference type="InterPro" id="IPR002061">
    <property type="entry name" value="Scorpion_toxinL/defensin"/>
</dbReference>
<dbReference type="Pfam" id="PF00537">
    <property type="entry name" value="Toxin_3"/>
    <property type="match status" value="1"/>
</dbReference>
<dbReference type="PRINTS" id="PR00285">
    <property type="entry name" value="SCORPNTOXIN"/>
</dbReference>
<dbReference type="SMART" id="SM00505">
    <property type="entry name" value="Knot1"/>
    <property type="match status" value="1"/>
</dbReference>
<dbReference type="SUPFAM" id="SSF57095">
    <property type="entry name" value="Scorpion toxin-like"/>
    <property type="match status" value="1"/>
</dbReference>
<dbReference type="PROSITE" id="PS51863">
    <property type="entry name" value="LCN_CSAB"/>
    <property type="match status" value="1"/>
</dbReference>
<keyword id="KW-0027">Amidation</keyword>
<keyword id="KW-0903">Direct protein sequencing</keyword>
<keyword id="KW-1015">Disulfide bond</keyword>
<keyword id="KW-0872">Ion channel impairing toxin</keyword>
<keyword id="KW-0528">Neurotoxin</keyword>
<keyword id="KW-0964">Secreted</keyword>
<keyword id="KW-0732">Signal</keyword>
<keyword id="KW-0800">Toxin</keyword>
<keyword id="KW-0738">Voltage-gated sodium channel impairing toxin</keyword>